<dbReference type="EC" id="2.4.2.29" evidence="1"/>
<dbReference type="EMBL" id="CP000266">
    <property type="protein sequence ID" value="ABF02643.1"/>
    <property type="molecule type" value="Genomic_DNA"/>
</dbReference>
<dbReference type="RefSeq" id="WP_000667315.1">
    <property type="nucleotide sequence ID" value="NC_008258.1"/>
</dbReference>
<dbReference type="SMR" id="Q0T7I3"/>
<dbReference type="KEGG" id="sfv:SFV_0371"/>
<dbReference type="HOGENOM" id="CLU_022060_0_1_6"/>
<dbReference type="UniPathway" id="UPA00392"/>
<dbReference type="Proteomes" id="UP000000659">
    <property type="component" value="Chromosome"/>
</dbReference>
<dbReference type="GO" id="GO:0005829">
    <property type="term" value="C:cytosol"/>
    <property type="evidence" value="ECO:0007669"/>
    <property type="project" value="TreeGrafter"/>
</dbReference>
<dbReference type="GO" id="GO:0046872">
    <property type="term" value="F:metal ion binding"/>
    <property type="evidence" value="ECO:0007669"/>
    <property type="project" value="UniProtKB-KW"/>
</dbReference>
<dbReference type="GO" id="GO:0008479">
    <property type="term" value="F:tRNA-guanosine(34) queuine transglycosylase activity"/>
    <property type="evidence" value="ECO:0007669"/>
    <property type="project" value="UniProtKB-UniRule"/>
</dbReference>
<dbReference type="GO" id="GO:0008616">
    <property type="term" value="P:queuosine biosynthetic process"/>
    <property type="evidence" value="ECO:0007669"/>
    <property type="project" value="UniProtKB-UniRule"/>
</dbReference>
<dbReference type="GO" id="GO:0002099">
    <property type="term" value="P:tRNA wobble guanine modification"/>
    <property type="evidence" value="ECO:0007669"/>
    <property type="project" value="TreeGrafter"/>
</dbReference>
<dbReference type="GO" id="GO:0101030">
    <property type="term" value="P:tRNA-guanine transglycosylation"/>
    <property type="evidence" value="ECO:0007669"/>
    <property type="project" value="InterPro"/>
</dbReference>
<dbReference type="FunFam" id="3.20.20.105:FF:000001">
    <property type="entry name" value="Queuine tRNA-ribosyltransferase"/>
    <property type="match status" value="1"/>
</dbReference>
<dbReference type="Gene3D" id="3.20.20.105">
    <property type="entry name" value="Queuine tRNA-ribosyltransferase-like"/>
    <property type="match status" value="1"/>
</dbReference>
<dbReference type="HAMAP" id="MF_00168">
    <property type="entry name" value="Q_tRNA_Tgt"/>
    <property type="match status" value="1"/>
</dbReference>
<dbReference type="InterPro" id="IPR050076">
    <property type="entry name" value="ArchSynthase1/Queuine_TRR"/>
</dbReference>
<dbReference type="InterPro" id="IPR004803">
    <property type="entry name" value="TGT"/>
</dbReference>
<dbReference type="InterPro" id="IPR036511">
    <property type="entry name" value="TGT-like_sf"/>
</dbReference>
<dbReference type="InterPro" id="IPR002616">
    <property type="entry name" value="tRNA_ribo_trans-like"/>
</dbReference>
<dbReference type="NCBIfam" id="TIGR00430">
    <property type="entry name" value="Q_tRNA_tgt"/>
    <property type="match status" value="1"/>
</dbReference>
<dbReference type="NCBIfam" id="TIGR00449">
    <property type="entry name" value="tgt_general"/>
    <property type="match status" value="1"/>
</dbReference>
<dbReference type="PANTHER" id="PTHR46499">
    <property type="entry name" value="QUEUINE TRNA-RIBOSYLTRANSFERASE"/>
    <property type="match status" value="1"/>
</dbReference>
<dbReference type="PANTHER" id="PTHR46499:SF1">
    <property type="entry name" value="QUEUINE TRNA-RIBOSYLTRANSFERASE"/>
    <property type="match status" value="1"/>
</dbReference>
<dbReference type="Pfam" id="PF01702">
    <property type="entry name" value="TGT"/>
    <property type="match status" value="1"/>
</dbReference>
<dbReference type="SUPFAM" id="SSF51713">
    <property type="entry name" value="tRNA-guanine transglycosylase"/>
    <property type="match status" value="1"/>
</dbReference>
<feature type="chain" id="PRO_1000016856" description="Queuine tRNA-ribosyltransferase">
    <location>
        <begin position="1"/>
        <end position="375"/>
    </location>
</feature>
<feature type="region of interest" description="RNA binding" evidence="1">
    <location>
        <begin position="245"/>
        <end position="251"/>
    </location>
</feature>
<feature type="region of interest" description="RNA binding; important for wobble base 34 recognition" evidence="1">
    <location>
        <begin position="269"/>
        <end position="273"/>
    </location>
</feature>
<feature type="active site" description="Proton acceptor" evidence="1">
    <location>
        <position position="89"/>
    </location>
</feature>
<feature type="active site" description="Nucleophile" evidence="1">
    <location>
        <position position="264"/>
    </location>
</feature>
<feature type="binding site" evidence="1">
    <location>
        <begin position="89"/>
        <end position="93"/>
    </location>
    <ligand>
        <name>substrate</name>
    </ligand>
</feature>
<feature type="binding site" evidence="1">
    <location>
        <position position="143"/>
    </location>
    <ligand>
        <name>substrate</name>
    </ligand>
</feature>
<feature type="binding site" evidence="1">
    <location>
        <position position="187"/>
    </location>
    <ligand>
        <name>substrate</name>
    </ligand>
</feature>
<feature type="binding site" evidence="1">
    <location>
        <position position="214"/>
    </location>
    <ligand>
        <name>substrate</name>
    </ligand>
</feature>
<feature type="binding site" evidence="1">
    <location>
        <position position="302"/>
    </location>
    <ligand>
        <name>Zn(2+)</name>
        <dbReference type="ChEBI" id="CHEBI:29105"/>
    </ligand>
</feature>
<feature type="binding site" evidence="1">
    <location>
        <position position="304"/>
    </location>
    <ligand>
        <name>Zn(2+)</name>
        <dbReference type="ChEBI" id="CHEBI:29105"/>
    </ligand>
</feature>
<feature type="binding site" evidence="1">
    <location>
        <position position="307"/>
    </location>
    <ligand>
        <name>Zn(2+)</name>
        <dbReference type="ChEBI" id="CHEBI:29105"/>
    </ligand>
</feature>
<feature type="binding site" evidence="1">
    <location>
        <position position="333"/>
    </location>
    <ligand>
        <name>Zn(2+)</name>
        <dbReference type="ChEBI" id="CHEBI:29105"/>
    </ligand>
</feature>
<gene>
    <name evidence="1" type="primary">tgt</name>
    <name type="ordered locus">SFV_0371</name>
</gene>
<accession>Q0T7I3</accession>
<comment type="function">
    <text evidence="1">Catalyzes the base-exchange of a guanine (G) residue with the queuine precursor 7-aminomethyl-7-deazaguanine (PreQ1) at position 34 (anticodon wobble position) in tRNAs with GU(N) anticodons (tRNA-Asp, -Asn, -His and -Tyr). Catalysis occurs through a double-displacement mechanism. The nucleophile active site attacks the C1' of nucleotide 34 to detach the guanine base from the RNA, forming a covalent enzyme-RNA intermediate. The proton acceptor active site deprotonates the incoming PreQ1, allowing a nucleophilic attack on the C1' of the ribose to form the product. After dissociation, two additional enzymatic reactions on the tRNA convert PreQ1 to queuine (Q), resulting in the hypermodified nucleoside queuosine (7-(((4,5-cis-dihydroxy-2-cyclopenten-1-yl)amino)methyl)-7-deazaguanosine).</text>
</comment>
<comment type="catalytic activity">
    <reaction evidence="1">
        <text>7-aminomethyl-7-carbaguanine + guanosine(34) in tRNA = 7-aminomethyl-7-carbaguanosine(34) in tRNA + guanine</text>
        <dbReference type="Rhea" id="RHEA:24104"/>
        <dbReference type="Rhea" id="RHEA-COMP:10341"/>
        <dbReference type="Rhea" id="RHEA-COMP:10342"/>
        <dbReference type="ChEBI" id="CHEBI:16235"/>
        <dbReference type="ChEBI" id="CHEBI:58703"/>
        <dbReference type="ChEBI" id="CHEBI:74269"/>
        <dbReference type="ChEBI" id="CHEBI:82833"/>
        <dbReference type="EC" id="2.4.2.29"/>
    </reaction>
</comment>
<comment type="cofactor">
    <cofactor evidence="1">
        <name>Zn(2+)</name>
        <dbReference type="ChEBI" id="CHEBI:29105"/>
    </cofactor>
    <text evidence="1">Binds 1 zinc ion per subunit.</text>
</comment>
<comment type="pathway">
    <text evidence="1">tRNA modification; tRNA-queuosine biosynthesis.</text>
</comment>
<comment type="subunit">
    <text evidence="1">Homodimer. Within each dimer, one monomer is responsible for RNA recognition and catalysis, while the other monomer binds to the replacement base PreQ1.</text>
</comment>
<comment type="similarity">
    <text evidence="1">Belongs to the queuine tRNA-ribosyltransferase family.</text>
</comment>
<reference key="1">
    <citation type="journal article" date="2006" name="BMC Genomics">
        <title>Complete genome sequence of Shigella flexneri 5b and comparison with Shigella flexneri 2a.</title>
        <authorList>
            <person name="Nie H."/>
            <person name="Yang F."/>
            <person name="Zhang X."/>
            <person name="Yang J."/>
            <person name="Chen L."/>
            <person name="Wang J."/>
            <person name="Xiong Z."/>
            <person name="Peng J."/>
            <person name="Sun L."/>
            <person name="Dong J."/>
            <person name="Xue Y."/>
            <person name="Xu X."/>
            <person name="Chen S."/>
            <person name="Yao Z."/>
            <person name="Shen Y."/>
            <person name="Jin Q."/>
        </authorList>
    </citation>
    <scope>NUCLEOTIDE SEQUENCE [LARGE SCALE GENOMIC DNA]</scope>
    <source>
        <strain>8401</strain>
    </source>
</reference>
<evidence type="ECO:0000255" key="1">
    <source>
        <dbReference type="HAMAP-Rule" id="MF_00168"/>
    </source>
</evidence>
<name>TGT_SHIF8</name>
<proteinExistence type="inferred from homology"/>
<protein>
    <recommendedName>
        <fullName evidence="1">Queuine tRNA-ribosyltransferase</fullName>
        <ecNumber evidence="1">2.4.2.29</ecNumber>
    </recommendedName>
    <alternativeName>
        <fullName evidence="1">Guanine insertion enzyme</fullName>
    </alternativeName>
    <alternativeName>
        <fullName evidence="1">tRNA-guanine transglycosylase</fullName>
    </alternativeName>
</protein>
<organism>
    <name type="scientific">Shigella flexneri serotype 5b (strain 8401)</name>
    <dbReference type="NCBI Taxonomy" id="373384"/>
    <lineage>
        <taxon>Bacteria</taxon>
        <taxon>Pseudomonadati</taxon>
        <taxon>Pseudomonadota</taxon>
        <taxon>Gammaproteobacteria</taxon>
        <taxon>Enterobacterales</taxon>
        <taxon>Enterobacteriaceae</taxon>
        <taxon>Shigella</taxon>
    </lineage>
</organism>
<sequence length="375" mass="42608">MKFELDTTDGRARRGRLVFDRGVVETPCFMPVGTYGTVKGMTPEEVEATGAQIILGNTFHLWLRPGQEIMKLHGDLHDFMQWKGPILTDSGGFQVFSLGDIRKITEQGVHFRNPINGDPIFLDPEKSMEIQYDLGSDIVMIFDECTPYPADWDYAKRSMEMSLRWAKRSRERFDSLGNKNALFGIIQGSIYEDLRDISVKGLVDIGFDGYAVGGLAVGEPKADMHRILEHVCPQIPADKPRYLMGVGKPEDLVEGVRRGIDMFDCVMPTRNARNGHLFVTDGVVKIRNAKYKSDTGPLDPECDCYTCRNYSRAYLHHLDRCNEILGARLNTIHNLRYYQRLMAGLRKAIEEGKLESFVTDFYQRQGREVPPLNVD</sequence>
<keyword id="KW-0328">Glycosyltransferase</keyword>
<keyword id="KW-0479">Metal-binding</keyword>
<keyword id="KW-0671">Queuosine biosynthesis</keyword>
<keyword id="KW-0808">Transferase</keyword>
<keyword id="KW-0819">tRNA processing</keyword>
<keyword id="KW-0862">Zinc</keyword>